<proteinExistence type="inferred from homology"/>
<feature type="chain" id="PRO_1000118737" description="Methionine--tRNA ligase">
    <location>
        <begin position="1"/>
        <end position="572"/>
    </location>
</feature>
<feature type="short sequence motif" description="'HIGH' region">
    <location>
        <begin position="11"/>
        <end position="21"/>
    </location>
</feature>
<feature type="short sequence motif" description="'KMSKS' region">
    <location>
        <begin position="346"/>
        <end position="350"/>
    </location>
</feature>
<feature type="binding site" evidence="1">
    <location>
        <position position="143"/>
    </location>
    <ligand>
        <name>Zn(2+)</name>
        <dbReference type="ChEBI" id="CHEBI:29105"/>
    </ligand>
</feature>
<feature type="binding site" evidence="1">
    <location>
        <position position="146"/>
    </location>
    <ligand>
        <name>Zn(2+)</name>
        <dbReference type="ChEBI" id="CHEBI:29105"/>
    </ligand>
</feature>
<feature type="binding site" evidence="1">
    <location>
        <position position="156"/>
    </location>
    <ligand>
        <name>Zn(2+)</name>
        <dbReference type="ChEBI" id="CHEBI:29105"/>
    </ligand>
</feature>
<feature type="binding site" evidence="1">
    <location>
        <position position="159"/>
    </location>
    <ligand>
        <name>Zn(2+)</name>
        <dbReference type="ChEBI" id="CHEBI:29105"/>
    </ligand>
</feature>
<feature type="binding site" evidence="1">
    <location>
        <position position="349"/>
    </location>
    <ligand>
        <name>ATP</name>
        <dbReference type="ChEBI" id="CHEBI:30616"/>
    </ligand>
</feature>
<gene>
    <name evidence="1" type="primary">metG</name>
    <name type="ordered locus">RSKD131_1760</name>
</gene>
<protein>
    <recommendedName>
        <fullName evidence="1">Methionine--tRNA ligase</fullName>
        <ecNumber evidence="1">6.1.1.10</ecNumber>
    </recommendedName>
    <alternativeName>
        <fullName evidence="1">Methionyl-tRNA synthetase</fullName>
        <shortName evidence="1">MetRS</shortName>
    </alternativeName>
</protein>
<dbReference type="EC" id="6.1.1.10" evidence="1"/>
<dbReference type="EMBL" id="CP001150">
    <property type="protein sequence ID" value="ACM01620.1"/>
    <property type="molecule type" value="Genomic_DNA"/>
</dbReference>
<dbReference type="RefSeq" id="WP_015920952.1">
    <property type="nucleotide sequence ID" value="NC_011963.1"/>
</dbReference>
<dbReference type="SMR" id="B9KKH3"/>
<dbReference type="GeneID" id="67447160"/>
<dbReference type="KEGG" id="rsk:RSKD131_1760"/>
<dbReference type="HOGENOM" id="CLU_009710_3_2_5"/>
<dbReference type="GO" id="GO:0017101">
    <property type="term" value="C:aminoacyl-tRNA synthetase multienzyme complex"/>
    <property type="evidence" value="ECO:0007669"/>
    <property type="project" value="TreeGrafter"/>
</dbReference>
<dbReference type="GO" id="GO:0005829">
    <property type="term" value="C:cytosol"/>
    <property type="evidence" value="ECO:0007669"/>
    <property type="project" value="TreeGrafter"/>
</dbReference>
<dbReference type="GO" id="GO:0005524">
    <property type="term" value="F:ATP binding"/>
    <property type="evidence" value="ECO:0007669"/>
    <property type="project" value="UniProtKB-UniRule"/>
</dbReference>
<dbReference type="GO" id="GO:0046872">
    <property type="term" value="F:metal ion binding"/>
    <property type="evidence" value="ECO:0007669"/>
    <property type="project" value="UniProtKB-KW"/>
</dbReference>
<dbReference type="GO" id="GO:0004825">
    <property type="term" value="F:methionine-tRNA ligase activity"/>
    <property type="evidence" value="ECO:0007669"/>
    <property type="project" value="UniProtKB-UniRule"/>
</dbReference>
<dbReference type="GO" id="GO:0006431">
    <property type="term" value="P:methionyl-tRNA aminoacylation"/>
    <property type="evidence" value="ECO:0007669"/>
    <property type="project" value="UniProtKB-UniRule"/>
</dbReference>
<dbReference type="CDD" id="cd07957">
    <property type="entry name" value="Anticodon_Ia_Met"/>
    <property type="match status" value="1"/>
</dbReference>
<dbReference type="CDD" id="cd00814">
    <property type="entry name" value="MetRS_core"/>
    <property type="match status" value="1"/>
</dbReference>
<dbReference type="FunFam" id="2.20.28.20:FF:000001">
    <property type="entry name" value="Methionine--tRNA ligase"/>
    <property type="match status" value="1"/>
</dbReference>
<dbReference type="Gene3D" id="3.40.50.620">
    <property type="entry name" value="HUPs"/>
    <property type="match status" value="1"/>
</dbReference>
<dbReference type="Gene3D" id="1.10.730.10">
    <property type="entry name" value="Isoleucyl-tRNA Synthetase, Domain 1"/>
    <property type="match status" value="1"/>
</dbReference>
<dbReference type="Gene3D" id="2.20.28.20">
    <property type="entry name" value="Methionyl-tRNA synthetase, Zn-domain"/>
    <property type="match status" value="1"/>
</dbReference>
<dbReference type="HAMAP" id="MF_00098">
    <property type="entry name" value="Met_tRNA_synth_type1"/>
    <property type="match status" value="1"/>
</dbReference>
<dbReference type="InterPro" id="IPR041872">
    <property type="entry name" value="Anticodon_Met"/>
</dbReference>
<dbReference type="InterPro" id="IPR023458">
    <property type="entry name" value="Met-tRNA_ligase_1"/>
</dbReference>
<dbReference type="InterPro" id="IPR014758">
    <property type="entry name" value="Met-tRNA_synth"/>
</dbReference>
<dbReference type="InterPro" id="IPR015413">
    <property type="entry name" value="Methionyl/Leucyl_tRNA_Synth"/>
</dbReference>
<dbReference type="InterPro" id="IPR033911">
    <property type="entry name" value="MetRS_core"/>
</dbReference>
<dbReference type="InterPro" id="IPR029038">
    <property type="entry name" value="MetRS_Zn"/>
</dbReference>
<dbReference type="InterPro" id="IPR014729">
    <property type="entry name" value="Rossmann-like_a/b/a_fold"/>
</dbReference>
<dbReference type="InterPro" id="IPR009080">
    <property type="entry name" value="tRNAsynth_Ia_anticodon-bd"/>
</dbReference>
<dbReference type="NCBIfam" id="TIGR00398">
    <property type="entry name" value="metG"/>
    <property type="match status" value="1"/>
</dbReference>
<dbReference type="PANTHER" id="PTHR45765">
    <property type="entry name" value="METHIONINE--TRNA LIGASE"/>
    <property type="match status" value="1"/>
</dbReference>
<dbReference type="PANTHER" id="PTHR45765:SF1">
    <property type="entry name" value="METHIONINE--TRNA LIGASE, CYTOPLASMIC"/>
    <property type="match status" value="1"/>
</dbReference>
<dbReference type="Pfam" id="PF19303">
    <property type="entry name" value="Anticodon_3"/>
    <property type="match status" value="1"/>
</dbReference>
<dbReference type="Pfam" id="PF09334">
    <property type="entry name" value="tRNA-synt_1g"/>
    <property type="match status" value="1"/>
</dbReference>
<dbReference type="PRINTS" id="PR01041">
    <property type="entry name" value="TRNASYNTHMET"/>
</dbReference>
<dbReference type="SUPFAM" id="SSF47323">
    <property type="entry name" value="Anticodon-binding domain of a subclass of class I aminoacyl-tRNA synthetases"/>
    <property type="match status" value="1"/>
</dbReference>
<dbReference type="SUPFAM" id="SSF57770">
    <property type="entry name" value="Methionyl-tRNA synthetase (MetRS), Zn-domain"/>
    <property type="match status" value="1"/>
</dbReference>
<dbReference type="SUPFAM" id="SSF52374">
    <property type="entry name" value="Nucleotidylyl transferase"/>
    <property type="match status" value="1"/>
</dbReference>
<evidence type="ECO:0000255" key="1">
    <source>
        <dbReference type="HAMAP-Rule" id="MF_00098"/>
    </source>
</evidence>
<comment type="function">
    <text evidence="1">Is required not only for elongation of protein synthesis but also for the initiation of all mRNA translation through initiator tRNA(fMet) aminoacylation.</text>
</comment>
<comment type="catalytic activity">
    <reaction evidence="1">
        <text>tRNA(Met) + L-methionine + ATP = L-methionyl-tRNA(Met) + AMP + diphosphate</text>
        <dbReference type="Rhea" id="RHEA:13481"/>
        <dbReference type="Rhea" id="RHEA-COMP:9667"/>
        <dbReference type="Rhea" id="RHEA-COMP:9698"/>
        <dbReference type="ChEBI" id="CHEBI:30616"/>
        <dbReference type="ChEBI" id="CHEBI:33019"/>
        <dbReference type="ChEBI" id="CHEBI:57844"/>
        <dbReference type="ChEBI" id="CHEBI:78442"/>
        <dbReference type="ChEBI" id="CHEBI:78530"/>
        <dbReference type="ChEBI" id="CHEBI:456215"/>
        <dbReference type="EC" id="6.1.1.10"/>
    </reaction>
</comment>
<comment type="cofactor">
    <cofactor evidence="1">
        <name>Zn(2+)</name>
        <dbReference type="ChEBI" id="CHEBI:29105"/>
    </cofactor>
    <text evidence="1">Binds 1 zinc ion per subunit.</text>
</comment>
<comment type="subunit">
    <text evidence="1">Monomer.</text>
</comment>
<comment type="subcellular location">
    <subcellularLocation>
        <location evidence="1">Cytoplasm</location>
    </subcellularLocation>
</comment>
<comment type="similarity">
    <text evidence="1">Belongs to the class-I aminoacyl-tRNA synthetase family. MetG type 1 subfamily.</text>
</comment>
<sequence length="572" mass="64572">MARILITSAIPYINGIKHLGNLVGSQLPADLYARYMRGRGHEVMFICATDEHGTPAELAAAKAGKPVEDYCAEMHEVQKEIAAGFRLSFDHFGRSSSARNHRLTQHFAGALAENGFIEEVVERQFFSVADNRFLPDRYIEGTCPNCGYDKARGDQCENCTKQLDPTDLIDPRSAISGSTELELRETKHLYLRQRALKDEIEAWIDSKTDWPVLTTSIAKKWLHDGEGLQDRGITRDLKWGVPVRKGSEPWPGMEGKVFYVWFDAPIEYIAGTAEWADANGKADADWERWWRTDRGAEDVRYVQFMGKDNVPFHTLSFPATIMGSREPWKLVDYIKSFNYLNYDGGQFSTSQGRGVFMDQALSILPADYWRWWLLSHAPENSDSEFTWENFQSSVNKDLADVLGNLVSRVTKFCRSKFGETVPAGGSPGEREHQLVAELQQQLAAYETCMEAMEVRKAAAELRALWVAGNEYLQSAAPWTVVKTDPEQAQAMIRLALNLIRLYAVISRPFIPDAAASMMASLGCEDWSWPADVGRALEVLPPGHGFTTPEVLFRKITDEERAEWQTRFSGVRT</sequence>
<reference key="1">
    <citation type="journal article" date="2009" name="J. Bacteriol.">
        <title>Complete genome sequence of Rhodobacter sphaeroides KD131.</title>
        <authorList>
            <person name="Lim S.-K."/>
            <person name="Kim S.J."/>
            <person name="Cha S.H."/>
            <person name="Oh Y.-K."/>
            <person name="Rhee H.-J."/>
            <person name="Kim M.-S."/>
            <person name="Lee J.K."/>
        </authorList>
    </citation>
    <scope>NUCLEOTIDE SEQUENCE [LARGE SCALE GENOMIC DNA]</scope>
    <source>
        <strain>KD131 / KCTC 12085</strain>
    </source>
</reference>
<organism>
    <name type="scientific">Cereibacter sphaeroides (strain KD131 / KCTC 12085)</name>
    <name type="common">Rhodobacter sphaeroides</name>
    <dbReference type="NCBI Taxonomy" id="557760"/>
    <lineage>
        <taxon>Bacteria</taxon>
        <taxon>Pseudomonadati</taxon>
        <taxon>Pseudomonadota</taxon>
        <taxon>Alphaproteobacteria</taxon>
        <taxon>Rhodobacterales</taxon>
        <taxon>Paracoccaceae</taxon>
        <taxon>Cereibacter</taxon>
    </lineage>
</organism>
<accession>B9KKH3</accession>
<name>SYM_CERSK</name>
<keyword id="KW-0030">Aminoacyl-tRNA synthetase</keyword>
<keyword id="KW-0067">ATP-binding</keyword>
<keyword id="KW-0963">Cytoplasm</keyword>
<keyword id="KW-0436">Ligase</keyword>
<keyword id="KW-0479">Metal-binding</keyword>
<keyword id="KW-0547">Nucleotide-binding</keyword>
<keyword id="KW-0648">Protein biosynthesis</keyword>
<keyword id="KW-0862">Zinc</keyword>